<protein>
    <recommendedName>
        <fullName evidence="1">Glycerol-3-phosphate acyltransferase</fullName>
        <shortName evidence="1">GPAT</shortName>
        <ecNumber evidence="1">2.3.1.15</ecNumber>
    </recommendedName>
</protein>
<name>PLSB_SHEHH</name>
<sequence>MSKQDSLWFKSLRWLQRKLVHTVVVPHDPFDDLNLDPSKPLVYVMKTESVSDIAALSEMTEKLGLPSPYEELEVNGIRAPRVVCLEGSKPLFGQREGGEQYIDYFKRLLSVHKQNLELDIQLVPVSLYWGRTPGKEDDTMRAAVLERQNPTWLRKCLMILFLGRHNFVQFSNAVSLRYMADEHGTDKRIAQKLARVARAHFERQRKVMTGPQLPKRQALFHALLKSDSITKAIKEEAASKKISESEARAKAMEYLDEVAADYSDSLVRIAERFLTWLWNKLYKGINIKGAEQVRQLHHDGHEIVYVPCHRSHMDYLLLSYILYYQGMVPPHIAAGINLNFWPAGPAFRRGGAFFIRRSFGGNKLYTAVFREYLDQLFTKGYSVEYFTEGGRSRTGRLLAPKTGMLAMTLNSVLRGVERPVTLVPVYLGYDHVMEVATYHKELSGKKKKKESVWQIFGAIRKLGNFGQGYVNFGEPITLHNFLNEQVPSWRDDIAKDPDQKPTWLTPVVNTLANQVMTNINDAAAVSSVTLTSMVLLASEQNALERSQLEKQLDLYLTLLKERPYTDYTSVPDGTGHDLVSQGLELKKLQIESDPLGDIISIDQSIAITMTYYRNNIIHLMVLPSLIAACLLRKENCGRNDVISIVNDFYPLLEAELFMGIEDPSQYANQILDILVAQGLVVECDHFEVVDSSINQLLLLSGTISETMQRYAILFNLLEVKPNMERSELEKDSHRLAQRLGALHGITAPEFYDKKLYATLSVKLKELGYLTDNQGCSDIKRIKERANLLLRSSVKQTIVDSVHAEHIA</sequence>
<comment type="catalytic activity">
    <reaction evidence="1">
        <text>sn-glycerol 3-phosphate + an acyl-CoA = a 1-acyl-sn-glycero-3-phosphate + CoA</text>
        <dbReference type="Rhea" id="RHEA:15325"/>
        <dbReference type="ChEBI" id="CHEBI:57287"/>
        <dbReference type="ChEBI" id="CHEBI:57597"/>
        <dbReference type="ChEBI" id="CHEBI:57970"/>
        <dbReference type="ChEBI" id="CHEBI:58342"/>
        <dbReference type="EC" id="2.3.1.15"/>
    </reaction>
</comment>
<comment type="pathway">
    <text evidence="1">Phospholipid metabolism; CDP-diacylglycerol biosynthesis; CDP-diacylglycerol from sn-glycerol 3-phosphate: step 1/3.</text>
</comment>
<comment type="subcellular location">
    <subcellularLocation>
        <location evidence="1">Cell inner membrane</location>
        <topology evidence="1">Peripheral membrane protein</topology>
        <orientation evidence="1">Cytoplasmic side</orientation>
    </subcellularLocation>
</comment>
<comment type="domain">
    <text evidence="1">The HXXXXD motif is essential for acyltransferase activity and may constitute the binding site for the phosphate moiety of the glycerol-3-phosphate.</text>
</comment>
<comment type="similarity">
    <text evidence="1">Belongs to the GPAT/DAPAT family.</text>
</comment>
<organism>
    <name type="scientific">Shewanella halifaxensis (strain HAW-EB4)</name>
    <dbReference type="NCBI Taxonomy" id="458817"/>
    <lineage>
        <taxon>Bacteria</taxon>
        <taxon>Pseudomonadati</taxon>
        <taxon>Pseudomonadota</taxon>
        <taxon>Gammaproteobacteria</taxon>
        <taxon>Alteromonadales</taxon>
        <taxon>Shewanellaceae</taxon>
        <taxon>Shewanella</taxon>
    </lineage>
</organism>
<proteinExistence type="inferred from homology"/>
<dbReference type="EC" id="2.3.1.15" evidence="1"/>
<dbReference type="EMBL" id="CP000931">
    <property type="protein sequence ID" value="ABZ74847.1"/>
    <property type="molecule type" value="Genomic_DNA"/>
</dbReference>
<dbReference type="RefSeq" id="WP_012275402.1">
    <property type="nucleotide sequence ID" value="NC_010334.1"/>
</dbReference>
<dbReference type="SMR" id="B0TNU4"/>
<dbReference type="STRING" id="458817.Shal_0271"/>
<dbReference type="KEGG" id="shl:Shal_0271"/>
<dbReference type="eggNOG" id="COG2937">
    <property type="taxonomic scope" value="Bacteria"/>
</dbReference>
<dbReference type="HOGENOM" id="CLU_015407_0_0_6"/>
<dbReference type="OrthoDB" id="335193at2"/>
<dbReference type="UniPathway" id="UPA00557">
    <property type="reaction ID" value="UER00612"/>
</dbReference>
<dbReference type="Proteomes" id="UP000001317">
    <property type="component" value="Chromosome"/>
</dbReference>
<dbReference type="GO" id="GO:0005886">
    <property type="term" value="C:plasma membrane"/>
    <property type="evidence" value="ECO:0007669"/>
    <property type="project" value="UniProtKB-SubCell"/>
</dbReference>
<dbReference type="GO" id="GO:0004366">
    <property type="term" value="F:glycerol-3-phosphate O-acyltransferase activity"/>
    <property type="evidence" value="ECO:0007669"/>
    <property type="project" value="UniProtKB-UniRule"/>
</dbReference>
<dbReference type="GO" id="GO:0016024">
    <property type="term" value="P:CDP-diacylglycerol biosynthetic process"/>
    <property type="evidence" value="ECO:0007669"/>
    <property type="project" value="UniProtKB-UniRule"/>
</dbReference>
<dbReference type="GO" id="GO:0006631">
    <property type="term" value="P:fatty acid metabolic process"/>
    <property type="evidence" value="ECO:0007669"/>
    <property type="project" value="TreeGrafter"/>
</dbReference>
<dbReference type="CDD" id="cd07993">
    <property type="entry name" value="LPLAT_DHAPAT-like"/>
    <property type="match status" value="1"/>
</dbReference>
<dbReference type="HAMAP" id="MF_00393">
    <property type="entry name" value="Glyc3P_acyltrans"/>
    <property type="match status" value="1"/>
</dbReference>
<dbReference type="InterPro" id="IPR022284">
    <property type="entry name" value="GPAT/DHAPAT"/>
</dbReference>
<dbReference type="InterPro" id="IPR045520">
    <property type="entry name" value="GPAT/DHAPAT_C"/>
</dbReference>
<dbReference type="InterPro" id="IPR041728">
    <property type="entry name" value="GPAT/DHAPAT_LPLAT"/>
</dbReference>
<dbReference type="InterPro" id="IPR028354">
    <property type="entry name" value="GPAT_PlsB"/>
</dbReference>
<dbReference type="InterPro" id="IPR002123">
    <property type="entry name" value="Plipid/glycerol_acylTrfase"/>
</dbReference>
<dbReference type="NCBIfam" id="TIGR03703">
    <property type="entry name" value="plsB"/>
    <property type="match status" value="1"/>
</dbReference>
<dbReference type="NCBIfam" id="NF003441">
    <property type="entry name" value="PRK04974.1"/>
    <property type="match status" value="1"/>
</dbReference>
<dbReference type="PANTHER" id="PTHR12563:SF17">
    <property type="entry name" value="DIHYDROXYACETONE PHOSPHATE ACYLTRANSFERASE"/>
    <property type="match status" value="1"/>
</dbReference>
<dbReference type="PANTHER" id="PTHR12563">
    <property type="entry name" value="GLYCEROL-3-PHOSPHATE ACYLTRANSFERASE"/>
    <property type="match status" value="1"/>
</dbReference>
<dbReference type="Pfam" id="PF01553">
    <property type="entry name" value="Acyltransferase"/>
    <property type="match status" value="1"/>
</dbReference>
<dbReference type="Pfam" id="PF19277">
    <property type="entry name" value="GPAT_C"/>
    <property type="match status" value="1"/>
</dbReference>
<dbReference type="PIRSF" id="PIRSF500064">
    <property type="entry name" value="GPAT"/>
    <property type="match status" value="1"/>
</dbReference>
<dbReference type="PIRSF" id="PIRSF000437">
    <property type="entry name" value="GPAT_DHAPAT"/>
    <property type="match status" value="1"/>
</dbReference>
<dbReference type="SMART" id="SM00563">
    <property type="entry name" value="PlsC"/>
    <property type="match status" value="1"/>
</dbReference>
<dbReference type="SUPFAM" id="SSF69593">
    <property type="entry name" value="Glycerol-3-phosphate (1)-acyltransferase"/>
    <property type="match status" value="1"/>
</dbReference>
<evidence type="ECO:0000255" key="1">
    <source>
        <dbReference type="HAMAP-Rule" id="MF_00393"/>
    </source>
</evidence>
<keyword id="KW-0012">Acyltransferase</keyword>
<keyword id="KW-0997">Cell inner membrane</keyword>
<keyword id="KW-1003">Cell membrane</keyword>
<keyword id="KW-0444">Lipid biosynthesis</keyword>
<keyword id="KW-0443">Lipid metabolism</keyword>
<keyword id="KW-0472">Membrane</keyword>
<keyword id="KW-0594">Phospholipid biosynthesis</keyword>
<keyword id="KW-1208">Phospholipid metabolism</keyword>
<keyword id="KW-0808">Transferase</keyword>
<gene>
    <name evidence="1" type="primary">plsB</name>
    <name type="ordered locus">Shal_0271</name>
</gene>
<reference key="1">
    <citation type="submission" date="2008-01" db="EMBL/GenBank/DDBJ databases">
        <title>Complete sequence of Shewanella halifaxensis HAW-EB4.</title>
        <authorList>
            <consortium name="US DOE Joint Genome Institute"/>
            <person name="Copeland A."/>
            <person name="Lucas S."/>
            <person name="Lapidus A."/>
            <person name="Glavina del Rio T."/>
            <person name="Dalin E."/>
            <person name="Tice H."/>
            <person name="Bruce D."/>
            <person name="Goodwin L."/>
            <person name="Pitluck S."/>
            <person name="Sims D."/>
            <person name="Brettin T."/>
            <person name="Detter J.C."/>
            <person name="Han C."/>
            <person name="Kuske C.R."/>
            <person name="Schmutz J."/>
            <person name="Larimer F."/>
            <person name="Land M."/>
            <person name="Hauser L."/>
            <person name="Kyrpides N."/>
            <person name="Kim E."/>
            <person name="Zhao J.-S."/>
            <person name="Richardson P."/>
        </authorList>
    </citation>
    <scope>NUCLEOTIDE SEQUENCE [LARGE SCALE GENOMIC DNA]</scope>
    <source>
        <strain>HAW-EB4</strain>
    </source>
</reference>
<accession>B0TNU4</accession>
<feature type="chain" id="PRO_1000080292" description="Glycerol-3-phosphate acyltransferase">
    <location>
        <begin position="1"/>
        <end position="807"/>
    </location>
</feature>
<feature type="short sequence motif" description="HXXXXD motif">
    <location>
        <begin position="308"/>
        <end position="313"/>
    </location>
</feature>